<dbReference type="EC" id="7.1.1.-" evidence="1"/>
<dbReference type="EMBL" id="CP000656">
    <property type="protein sequence ID" value="ABP46958.1"/>
    <property type="molecule type" value="Genomic_DNA"/>
</dbReference>
<dbReference type="SMR" id="A4TDB3"/>
<dbReference type="STRING" id="350054.Mflv_4489"/>
<dbReference type="KEGG" id="mgi:Mflv_4489"/>
<dbReference type="eggNOG" id="COG1143">
    <property type="taxonomic scope" value="Bacteria"/>
</dbReference>
<dbReference type="HOGENOM" id="CLU_067218_4_0_11"/>
<dbReference type="OrthoDB" id="9808559at2"/>
<dbReference type="GO" id="GO:0005886">
    <property type="term" value="C:plasma membrane"/>
    <property type="evidence" value="ECO:0007669"/>
    <property type="project" value="UniProtKB-SubCell"/>
</dbReference>
<dbReference type="GO" id="GO:0051539">
    <property type="term" value="F:4 iron, 4 sulfur cluster binding"/>
    <property type="evidence" value="ECO:0007669"/>
    <property type="project" value="UniProtKB-KW"/>
</dbReference>
<dbReference type="GO" id="GO:0005506">
    <property type="term" value="F:iron ion binding"/>
    <property type="evidence" value="ECO:0007669"/>
    <property type="project" value="UniProtKB-UniRule"/>
</dbReference>
<dbReference type="GO" id="GO:0050136">
    <property type="term" value="F:NADH:ubiquinone reductase (non-electrogenic) activity"/>
    <property type="evidence" value="ECO:0007669"/>
    <property type="project" value="UniProtKB-UniRule"/>
</dbReference>
<dbReference type="GO" id="GO:0048038">
    <property type="term" value="F:quinone binding"/>
    <property type="evidence" value="ECO:0007669"/>
    <property type="project" value="UniProtKB-KW"/>
</dbReference>
<dbReference type="GO" id="GO:0009060">
    <property type="term" value="P:aerobic respiration"/>
    <property type="evidence" value="ECO:0007669"/>
    <property type="project" value="TreeGrafter"/>
</dbReference>
<dbReference type="FunFam" id="3.30.70.3270:FF:000007">
    <property type="entry name" value="NADH-quinone oxidoreductase subunit I"/>
    <property type="match status" value="1"/>
</dbReference>
<dbReference type="Gene3D" id="3.30.70.3270">
    <property type="match status" value="1"/>
</dbReference>
<dbReference type="HAMAP" id="MF_01351">
    <property type="entry name" value="NDH1_NuoI"/>
    <property type="match status" value="1"/>
</dbReference>
<dbReference type="InterPro" id="IPR017896">
    <property type="entry name" value="4Fe4S_Fe-S-bd"/>
</dbReference>
<dbReference type="InterPro" id="IPR017900">
    <property type="entry name" value="4Fe4S_Fe_S_CS"/>
</dbReference>
<dbReference type="InterPro" id="IPR010226">
    <property type="entry name" value="NADH_quinone_OxRdtase_chainI"/>
</dbReference>
<dbReference type="NCBIfam" id="TIGR01971">
    <property type="entry name" value="NuoI"/>
    <property type="match status" value="1"/>
</dbReference>
<dbReference type="NCBIfam" id="NF004537">
    <property type="entry name" value="PRK05888.1-3"/>
    <property type="match status" value="1"/>
</dbReference>
<dbReference type="PANTHER" id="PTHR10849:SF20">
    <property type="entry name" value="NADH DEHYDROGENASE [UBIQUINONE] IRON-SULFUR PROTEIN 8, MITOCHONDRIAL"/>
    <property type="match status" value="1"/>
</dbReference>
<dbReference type="PANTHER" id="PTHR10849">
    <property type="entry name" value="NADH DEHYDROGENASE UBIQUINONE IRON-SULFUR PROTEIN 8, MITOCHONDRIAL"/>
    <property type="match status" value="1"/>
</dbReference>
<dbReference type="Pfam" id="PF12838">
    <property type="entry name" value="Fer4_7"/>
    <property type="match status" value="1"/>
</dbReference>
<dbReference type="SUPFAM" id="SSF54862">
    <property type="entry name" value="4Fe-4S ferredoxins"/>
    <property type="match status" value="1"/>
</dbReference>
<dbReference type="PROSITE" id="PS00198">
    <property type="entry name" value="4FE4S_FER_1"/>
    <property type="match status" value="2"/>
</dbReference>
<dbReference type="PROSITE" id="PS51379">
    <property type="entry name" value="4FE4S_FER_2"/>
    <property type="match status" value="2"/>
</dbReference>
<protein>
    <recommendedName>
        <fullName evidence="1">NADH-quinone oxidoreductase subunit I</fullName>
        <ecNumber evidence="1">7.1.1.-</ecNumber>
    </recommendedName>
    <alternativeName>
        <fullName evidence="1">NADH dehydrogenase I subunit I</fullName>
    </alternativeName>
    <alternativeName>
        <fullName evidence="1">NDH-1 subunit I</fullName>
    </alternativeName>
</protein>
<comment type="function">
    <text evidence="1">NDH-1 shuttles electrons from NADH, via FMN and iron-sulfur (Fe-S) centers, to quinones in the respiratory chain. The immediate electron acceptor for the enzyme in this species is believed to be menaquinone. Couples the redox reaction to proton translocation (for every two electrons transferred, four hydrogen ions are translocated across the cytoplasmic membrane), and thus conserves the redox energy in a proton gradient.</text>
</comment>
<comment type="catalytic activity">
    <reaction evidence="1">
        <text>a quinone + NADH + 5 H(+)(in) = a quinol + NAD(+) + 4 H(+)(out)</text>
        <dbReference type="Rhea" id="RHEA:57888"/>
        <dbReference type="ChEBI" id="CHEBI:15378"/>
        <dbReference type="ChEBI" id="CHEBI:24646"/>
        <dbReference type="ChEBI" id="CHEBI:57540"/>
        <dbReference type="ChEBI" id="CHEBI:57945"/>
        <dbReference type="ChEBI" id="CHEBI:132124"/>
    </reaction>
</comment>
<comment type="cofactor">
    <cofactor evidence="1">
        <name>[4Fe-4S] cluster</name>
        <dbReference type="ChEBI" id="CHEBI:49883"/>
    </cofactor>
    <text evidence="1">Binds 2 [4Fe-4S] clusters per subunit.</text>
</comment>
<comment type="subunit">
    <text evidence="1">NDH-1 is composed of 14 different subunits. Subunits NuoA, H, J, K, L, M, N constitute the membrane sector of the complex.</text>
</comment>
<comment type="subcellular location">
    <subcellularLocation>
        <location evidence="1">Cell membrane</location>
        <topology evidence="1">Peripheral membrane protein</topology>
    </subcellularLocation>
</comment>
<comment type="similarity">
    <text evidence="1">Belongs to the complex I 23 kDa subunit family.</text>
</comment>
<keyword id="KW-0004">4Fe-4S</keyword>
<keyword id="KW-1003">Cell membrane</keyword>
<keyword id="KW-0408">Iron</keyword>
<keyword id="KW-0411">Iron-sulfur</keyword>
<keyword id="KW-0472">Membrane</keyword>
<keyword id="KW-0479">Metal-binding</keyword>
<keyword id="KW-0520">NAD</keyword>
<keyword id="KW-0874">Quinone</keyword>
<keyword id="KW-0677">Repeat</keyword>
<keyword id="KW-1278">Translocase</keyword>
<feature type="chain" id="PRO_1000143656" description="NADH-quinone oxidoreductase subunit I">
    <location>
        <begin position="1"/>
        <end position="175"/>
    </location>
</feature>
<feature type="domain" description="4Fe-4S ferredoxin-type 1" evidence="1">
    <location>
        <begin position="44"/>
        <end position="74"/>
    </location>
</feature>
<feature type="domain" description="4Fe-4S ferredoxin-type 2" evidence="1">
    <location>
        <begin position="90"/>
        <end position="119"/>
    </location>
</feature>
<feature type="region of interest" description="Disordered" evidence="2">
    <location>
        <begin position="148"/>
        <end position="175"/>
    </location>
</feature>
<feature type="binding site" evidence="1">
    <location>
        <position position="54"/>
    </location>
    <ligand>
        <name>[4Fe-4S] cluster</name>
        <dbReference type="ChEBI" id="CHEBI:49883"/>
        <label>1</label>
    </ligand>
</feature>
<feature type="binding site" evidence="1">
    <location>
        <position position="57"/>
    </location>
    <ligand>
        <name>[4Fe-4S] cluster</name>
        <dbReference type="ChEBI" id="CHEBI:49883"/>
        <label>1</label>
    </ligand>
</feature>
<feature type="binding site" evidence="1">
    <location>
        <position position="60"/>
    </location>
    <ligand>
        <name>[4Fe-4S] cluster</name>
        <dbReference type="ChEBI" id="CHEBI:49883"/>
        <label>1</label>
    </ligand>
</feature>
<feature type="binding site" evidence="1">
    <location>
        <position position="64"/>
    </location>
    <ligand>
        <name>[4Fe-4S] cluster</name>
        <dbReference type="ChEBI" id="CHEBI:49883"/>
        <label>2</label>
    </ligand>
</feature>
<feature type="binding site" evidence="1">
    <location>
        <position position="99"/>
    </location>
    <ligand>
        <name>[4Fe-4S] cluster</name>
        <dbReference type="ChEBI" id="CHEBI:49883"/>
        <label>2</label>
    </ligand>
</feature>
<feature type="binding site" evidence="1">
    <location>
        <position position="102"/>
    </location>
    <ligand>
        <name>[4Fe-4S] cluster</name>
        <dbReference type="ChEBI" id="CHEBI:49883"/>
        <label>2</label>
    </ligand>
</feature>
<feature type="binding site" evidence="1">
    <location>
        <position position="105"/>
    </location>
    <ligand>
        <name>[4Fe-4S] cluster</name>
        <dbReference type="ChEBI" id="CHEBI:49883"/>
        <label>2</label>
    </ligand>
</feature>
<feature type="binding site" evidence="1">
    <location>
        <position position="109"/>
    </location>
    <ligand>
        <name>[4Fe-4S] cluster</name>
        <dbReference type="ChEBI" id="CHEBI:49883"/>
        <label>1</label>
    </ligand>
</feature>
<sequence>MPKFLDAVAGFGVTFGSMFKKPVTEEYPEKPGPVAKRYHGRHQLNRYADGLEKCIGCELCAWACPADAIFVEGADNTEAERYSPGERYGRVYQINYLRCIGCGLCIEACPTRALTMTNDYEMADDNRADLIYGKDKLLAPLEPGMGAPPHAMAPGATDEDYYRGTVSPSAEADAR</sequence>
<accession>A4TDB3</accession>
<gene>
    <name evidence="1" type="primary">nuoI</name>
    <name type="ordered locus">Mflv_4489</name>
</gene>
<reference key="1">
    <citation type="submission" date="2007-04" db="EMBL/GenBank/DDBJ databases">
        <title>Complete sequence of chromosome of Mycobacterium gilvum PYR-GCK.</title>
        <authorList>
            <consortium name="US DOE Joint Genome Institute"/>
            <person name="Copeland A."/>
            <person name="Lucas S."/>
            <person name="Lapidus A."/>
            <person name="Barry K."/>
            <person name="Detter J.C."/>
            <person name="Glavina del Rio T."/>
            <person name="Hammon N."/>
            <person name="Israni S."/>
            <person name="Dalin E."/>
            <person name="Tice H."/>
            <person name="Pitluck S."/>
            <person name="Chain P."/>
            <person name="Malfatti S."/>
            <person name="Shin M."/>
            <person name="Vergez L."/>
            <person name="Schmutz J."/>
            <person name="Larimer F."/>
            <person name="Land M."/>
            <person name="Hauser L."/>
            <person name="Kyrpides N."/>
            <person name="Mikhailova N."/>
            <person name="Miller C."/>
            <person name="Richardson P."/>
        </authorList>
    </citation>
    <scope>NUCLEOTIDE SEQUENCE [LARGE SCALE GENOMIC DNA]</scope>
    <source>
        <strain>PYR-GCK</strain>
    </source>
</reference>
<organism>
    <name type="scientific">Mycolicibacterium gilvum (strain PYR-GCK)</name>
    <name type="common">Mycobacterium gilvum (strain PYR-GCK)</name>
    <dbReference type="NCBI Taxonomy" id="350054"/>
    <lineage>
        <taxon>Bacteria</taxon>
        <taxon>Bacillati</taxon>
        <taxon>Actinomycetota</taxon>
        <taxon>Actinomycetes</taxon>
        <taxon>Mycobacteriales</taxon>
        <taxon>Mycobacteriaceae</taxon>
        <taxon>Mycolicibacterium</taxon>
    </lineage>
</organism>
<evidence type="ECO:0000255" key="1">
    <source>
        <dbReference type="HAMAP-Rule" id="MF_01351"/>
    </source>
</evidence>
<evidence type="ECO:0000256" key="2">
    <source>
        <dbReference type="SAM" id="MobiDB-lite"/>
    </source>
</evidence>
<name>NUOI_MYCGI</name>
<proteinExistence type="inferred from homology"/>